<proteinExistence type="inferred from homology"/>
<accession>Q82WM1</accession>
<sequence>MIRVLLANPRGFCAGVDRAIEIVERALAMYGAPIYVRHEVVHNRFVVEDLEKKGAVFVENLEEVPEGSMLIFSAHGVSHEVRREAAARKLQIFDATCPLVTKVHVEVAKMDKEGKEIVMIGHQGHPEVEGTMGQIAKSKGTMYLVETAEDVARLQVKNESNLAYVTQTTLSVDDAARVIEALKQRFPKIIGPKKDDICYATQNRQDAVKKLVKLCDLVVVVGSPNSSNSNRLCEVARNENVEAYMVDQAEQLQESWLTNKRCIGITAGASAPEILVQQVLERLEQIAAKQSNQGVIIEELSGVLESVTFPLPKAEPVSFNKYI</sequence>
<organism>
    <name type="scientific">Nitrosomonas europaea (strain ATCC 19718 / CIP 103999 / KCTC 2705 / NBRC 14298)</name>
    <dbReference type="NCBI Taxonomy" id="228410"/>
    <lineage>
        <taxon>Bacteria</taxon>
        <taxon>Pseudomonadati</taxon>
        <taxon>Pseudomonadota</taxon>
        <taxon>Betaproteobacteria</taxon>
        <taxon>Nitrosomonadales</taxon>
        <taxon>Nitrosomonadaceae</taxon>
        <taxon>Nitrosomonas</taxon>
    </lineage>
</organism>
<evidence type="ECO:0000255" key="1">
    <source>
        <dbReference type="HAMAP-Rule" id="MF_00191"/>
    </source>
</evidence>
<gene>
    <name evidence="1" type="primary">ispH</name>
    <name type="synonym">lytB</name>
    <name type="ordered locus">NE0649</name>
</gene>
<feature type="chain" id="PRO_0000128846" description="4-hydroxy-3-methylbut-2-enyl diphosphate reductase">
    <location>
        <begin position="1"/>
        <end position="323"/>
    </location>
</feature>
<feature type="active site" description="Proton donor" evidence="1">
    <location>
        <position position="127"/>
    </location>
</feature>
<feature type="binding site" evidence="1">
    <location>
        <position position="13"/>
    </location>
    <ligand>
        <name>[4Fe-4S] cluster</name>
        <dbReference type="ChEBI" id="CHEBI:49883"/>
    </ligand>
</feature>
<feature type="binding site" evidence="1">
    <location>
        <position position="42"/>
    </location>
    <ligand>
        <name>(2E)-4-hydroxy-3-methylbut-2-enyl diphosphate</name>
        <dbReference type="ChEBI" id="CHEBI:128753"/>
    </ligand>
</feature>
<feature type="binding site" evidence="1">
    <location>
        <position position="42"/>
    </location>
    <ligand>
        <name>dimethylallyl diphosphate</name>
        <dbReference type="ChEBI" id="CHEBI:57623"/>
    </ligand>
</feature>
<feature type="binding site" evidence="1">
    <location>
        <position position="42"/>
    </location>
    <ligand>
        <name>isopentenyl diphosphate</name>
        <dbReference type="ChEBI" id="CHEBI:128769"/>
    </ligand>
</feature>
<feature type="binding site" evidence="1">
    <location>
        <position position="75"/>
    </location>
    <ligand>
        <name>(2E)-4-hydroxy-3-methylbut-2-enyl diphosphate</name>
        <dbReference type="ChEBI" id="CHEBI:128753"/>
    </ligand>
</feature>
<feature type="binding site" evidence="1">
    <location>
        <position position="75"/>
    </location>
    <ligand>
        <name>dimethylallyl diphosphate</name>
        <dbReference type="ChEBI" id="CHEBI:57623"/>
    </ligand>
</feature>
<feature type="binding site" evidence="1">
    <location>
        <position position="75"/>
    </location>
    <ligand>
        <name>isopentenyl diphosphate</name>
        <dbReference type="ChEBI" id="CHEBI:128769"/>
    </ligand>
</feature>
<feature type="binding site" evidence="1">
    <location>
        <position position="97"/>
    </location>
    <ligand>
        <name>[4Fe-4S] cluster</name>
        <dbReference type="ChEBI" id="CHEBI:49883"/>
    </ligand>
</feature>
<feature type="binding site" evidence="1">
    <location>
        <position position="125"/>
    </location>
    <ligand>
        <name>(2E)-4-hydroxy-3-methylbut-2-enyl diphosphate</name>
        <dbReference type="ChEBI" id="CHEBI:128753"/>
    </ligand>
</feature>
<feature type="binding site" evidence="1">
    <location>
        <position position="125"/>
    </location>
    <ligand>
        <name>dimethylallyl diphosphate</name>
        <dbReference type="ChEBI" id="CHEBI:57623"/>
    </ligand>
</feature>
<feature type="binding site" evidence="1">
    <location>
        <position position="125"/>
    </location>
    <ligand>
        <name>isopentenyl diphosphate</name>
        <dbReference type="ChEBI" id="CHEBI:128769"/>
    </ligand>
</feature>
<feature type="binding site" evidence="1">
    <location>
        <position position="168"/>
    </location>
    <ligand>
        <name>(2E)-4-hydroxy-3-methylbut-2-enyl diphosphate</name>
        <dbReference type="ChEBI" id="CHEBI:128753"/>
    </ligand>
</feature>
<feature type="binding site" evidence="1">
    <location>
        <position position="198"/>
    </location>
    <ligand>
        <name>[4Fe-4S] cluster</name>
        <dbReference type="ChEBI" id="CHEBI:49883"/>
    </ligand>
</feature>
<feature type="binding site" evidence="1">
    <location>
        <position position="226"/>
    </location>
    <ligand>
        <name>(2E)-4-hydroxy-3-methylbut-2-enyl diphosphate</name>
        <dbReference type="ChEBI" id="CHEBI:128753"/>
    </ligand>
</feature>
<feature type="binding site" evidence="1">
    <location>
        <position position="226"/>
    </location>
    <ligand>
        <name>dimethylallyl diphosphate</name>
        <dbReference type="ChEBI" id="CHEBI:57623"/>
    </ligand>
</feature>
<feature type="binding site" evidence="1">
    <location>
        <position position="226"/>
    </location>
    <ligand>
        <name>isopentenyl diphosphate</name>
        <dbReference type="ChEBI" id="CHEBI:128769"/>
    </ligand>
</feature>
<feature type="binding site" evidence="1">
    <location>
        <position position="227"/>
    </location>
    <ligand>
        <name>(2E)-4-hydroxy-3-methylbut-2-enyl diphosphate</name>
        <dbReference type="ChEBI" id="CHEBI:128753"/>
    </ligand>
</feature>
<feature type="binding site" evidence="1">
    <location>
        <position position="227"/>
    </location>
    <ligand>
        <name>dimethylallyl diphosphate</name>
        <dbReference type="ChEBI" id="CHEBI:57623"/>
    </ligand>
</feature>
<feature type="binding site" evidence="1">
    <location>
        <position position="227"/>
    </location>
    <ligand>
        <name>isopentenyl diphosphate</name>
        <dbReference type="ChEBI" id="CHEBI:128769"/>
    </ligand>
</feature>
<feature type="binding site" evidence="1">
    <location>
        <position position="228"/>
    </location>
    <ligand>
        <name>(2E)-4-hydroxy-3-methylbut-2-enyl diphosphate</name>
        <dbReference type="ChEBI" id="CHEBI:128753"/>
    </ligand>
</feature>
<feature type="binding site" evidence="1">
    <location>
        <position position="228"/>
    </location>
    <ligand>
        <name>dimethylallyl diphosphate</name>
        <dbReference type="ChEBI" id="CHEBI:57623"/>
    </ligand>
</feature>
<feature type="binding site" evidence="1">
    <location>
        <position position="228"/>
    </location>
    <ligand>
        <name>isopentenyl diphosphate</name>
        <dbReference type="ChEBI" id="CHEBI:128769"/>
    </ligand>
</feature>
<feature type="binding site" evidence="1">
    <location>
        <position position="270"/>
    </location>
    <ligand>
        <name>(2E)-4-hydroxy-3-methylbut-2-enyl diphosphate</name>
        <dbReference type="ChEBI" id="CHEBI:128753"/>
    </ligand>
</feature>
<feature type="binding site" evidence="1">
    <location>
        <position position="270"/>
    </location>
    <ligand>
        <name>dimethylallyl diphosphate</name>
        <dbReference type="ChEBI" id="CHEBI:57623"/>
    </ligand>
</feature>
<feature type="binding site" evidence="1">
    <location>
        <position position="270"/>
    </location>
    <ligand>
        <name>isopentenyl diphosphate</name>
        <dbReference type="ChEBI" id="CHEBI:128769"/>
    </ligand>
</feature>
<name>ISPH_NITEU</name>
<reference key="1">
    <citation type="journal article" date="2003" name="J. Bacteriol.">
        <title>Complete genome sequence of the ammonia-oxidizing bacterium and obligate chemolithoautotroph Nitrosomonas europaea.</title>
        <authorList>
            <person name="Chain P."/>
            <person name="Lamerdin J.E."/>
            <person name="Larimer F.W."/>
            <person name="Regala W."/>
            <person name="Lao V."/>
            <person name="Land M.L."/>
            <person name="Hauser L."/>
            <person name="Hooper A.B."/>
            <person name="Klotz M.G."/>
            <person name="Norton J."/>
            <person name="Sayavedra-Soto L.A."/>
            <person name="Arciero D.M."/>
            <person name="Hommes N.G."/>
            <person name="Whittaker M.M."/>
            <person name="Arp D.J."/>
        </authorList>
    </citation>
    <scope>NUCLEOTIDE SEQUENCE [LARGE SCALE GENOMIC DNA]</scope>
    <source>
        <strain>ATCC 19718 / CIP 103999 / KCTC 2705 / NBRC 14298</strain>
    </source>
</reference>
<protein>
    <recommendedName>
        <fullName evidence="1">4-hydroxy-3-methylbut-2-enyl diphosphate reductase</fullName>
        <shortName evidence="1">HMBPP reductase</shortName>
        <ecNumber evidence="1">1.17.7.4</ecNumber>
    </recommendedName>
</protein>
<dbReference type="EC" id="1.17.7.4" evidence="1"/>
<dbReference type="EMBL" id="AL954747">
    <property type="protein sequence ID" value="CAD84560.1"/>
    <property type="molecule type" value="Genomic_DNA"/>
</dbReference>
<dbReference type="RefSeq" id="WP_011111272.1">
    <property type="nucleotide sequence ID" value="NC_004757.1"/>
</dbReference>
<dbReference type="SMR" id="Q82WM1"/>
<dbReference type="STRING" id="228410.NE0649"/>
<dbReference type="GeneID" id="87103846"/>
<dbReference type="KEGG" id="neu:NE0649"/>
<dbReference type="eggNOG" id="COG0761">
    <property type="taxonomic scope" value="Bacteria"/>
</dbReference>
<dbReference type="HOGENOM" id="CLU_027486_1_0_4"/>
<dbReference type="OrthoDB" id="9804068at2"/>
<dbReference type="PhylomeDB" id="Q82WM1"/>
<dbReference type="UniPathway" id="UPA00056">
    <property type="reaction ID" value="UER00097"/>
</dbReference>
<dbReference type="UniPathway" id="UPA00059">
    <property type="reaction ID" value="UER00105"/>
</dbReference>
<dbReference type="Proteomes" id="UP000001416">
    <property type="component" value="Chromosome"/>
</dbReference>
<dbReference type="GO" id="GO:0051539">
    <property type="term" value="F:4 iron, 4 sulfur cluster binding"/>
    <property type="evidence" value="ECO:0007669"/>
    <property type="project" value="UniProtKB-UniRule"/>
</dbReference>
<dbReference type="GO" id="GO:0051745">
    <property type="term" value="F:4-hydroxy-3-methylbut-2-enyl diphosphate reductase activity"/>
    <property type="evidence" value="ECO:0007669"/>
    <property type="project" value="UniProtKB-UniRule"/>
</dbReference>
<dbReference type="GO" id="GO:0046872">
    <property type="term" value="F:metal ion binding"/>
    <property type="evidence" value="ECO:0007669"/>
    <property type="project" value="UniProtKB-KW"/>
</dbReference>
<dbReference type="GO" id="GO:0050992">
    <property type="term" value="P:dimethylallyl diphosphate biosynthetic process"/>
    <property type="evidence" value="ECO:0007669"/>
    <property type="project" value="UniProtKB-UniRule"/>
</dbReference>
<dbReference type="GO" id="GO:0019288">
    <property type="term" value="P:isopentenyl diphosphate biosynthetic process, methylerythritol 4-phosphate pathway"/>
    <property type="evidence" value="ECO:0007669"/>
    <property type="project" value="UniProtKB-UniRule"/>
</dbReference>
<dbReference type="GO" id="GO:0016114">
    <property type="term" value="P:terpenoid biosynthetic process"/>
    <property type="evidence" value="ECO:0007669"/>
    <property type="project" value="UniProtKB-UniRule"/>
</dbReference>
<dbReference type="CDD" id="cd13944">
    <property type="entry name" value="lytB_ispH"/>
    <property type="match status" value="1"/>
</dbReference>
<dbReference type="Gene3D" id="3.40.50.11270">
    <property type="match status" value="1"/>
</dbReference>
<dbReference type="Gene3D" id="3.40.1010.20">
    <property type="entry name" value="4-hydroxy-3-methylbut-2-enyl diphosphate reductase, catalytic domain"/>
    <property type="match status" value="2"/>
</dbReference>
<dbReference type="HAMAP" id="MF_00191">
    <property type="entry name" value="IspH"/>
    <property type="match status" value="1"/>
</dbReference>
<dbReference type="InterPro" id="IPR003451">
    <property type="entry name" value="LytB/IspH"/>
</dbReference>
<dbReference type="NCBIfam" id="TIGR00216">
    <property type="entry name" value="ispH_lytB"/>
    <property type="match status" value="1"/>
</dbReference>
<dbReference type="NCBIfam" id="NF002188">
    <property type="entry name" value="PRK01045.1-2"/>
    <property type="match status" value="1"/>
</dbReference>
<dbReference type="NCBIfam" id="NF002190">
    <property type="entry name" value="PRK01045.1-4"/>
    <property type="match status" value="1"/>
</dbReference>
<dbReference type="PANTHER" id="PTHR30426">
    <property type="entry name" value="4-HYDROXY-3-METHYLBUT-2-ENYL DIPHOSPHATE REDUCTASE"/>
    <property type="match status" value="1"/>
</dbReference>
<dbReference type="PANTHER" id="PTHR30426:SF0">
    <property type="entry name" value="4-HYDROXY-3-METHYLBUT-2-ENYL DIPHOSPHATE REDUCTASE"/>
    <property type="match status" value="1"/>
</dbReference>
<dbReference type="Pfam" id="PF02401">
    <property type="entry name" value="LYTB"/>
    <property type="match status" value="1"/>
</dbReference>
<keyword id="KW-0004">4Fe-4S</keyword>
<keyword id="KW-0408">Iron</keyword>
<keyword id="KW-0411">Iron-sulfur</keyword>
<keyword id="KW-0414">Isoprene biosynthesis</keyword>
<keyword id="KW-0479">Metal-binding</keyword>
<keyword id="KW-0560">Oxidoreductase</keyword>
<keyword id="KW-1185">Reference proteome</keyword>
<comment type="function">
    <text evidence="1">Catalyzes the conversion of 1-hydroxy-2-methyl-2-(E)-butenyl 4-diphosphate (HMBPP) into a mixture of isopentenyl diphosphate (IPP) and dimethylallyl diphosphate (DMAPP). Acts in the terminal step of the DOXP/MEP pathway for isoprenoid precursor biosynthesis.</text>
</comment>
<comment type="catalytic activity">
    <reaction evidence="1">
        <text>isopentenyl diphosphate + 2 oxidized [2Fe-2S]-[ferredoxin] + H2O = (2E)-4-hydroxy-3-methylbut-2-enyl diphosphate + 2 reduced [2Fe-2S]-[ferredoxin] + 2 H(+)</text>
        <dbReference type="Rhea" id="RHEA:24488"/>
        <dbReference type="Rhea" id="RHEA-COMP:10000"/>
        <dbReference type="Rhea" id="RHEA-COMP:10001"/>
        <dbReference type="ChEBI" id="CHEBI:15377"/>
        <dbReference type="ChEBI" id="CHEBI:15378"/>
        <dbReference type="ChEBI" id="CHEBI:33737"/>
        <dbReference type="ChEBI" id="CHEBI:33738"/>
        <dbReference type="ChEBI" id="CHEBI:128753"/>
        <dbReference type="ChEBI" id="CHEBI:128769"/>
        <dbReference type="EC" id="1.17.7.4"/>
    </reaction>
</comment>
<comment type="catalytic activity">
    <reaction evidence="1">
        <text>dimethylallyl diphosphate + 2 oxidized [2Fe-2S]-[ferredoxin] + H2O = (2E)-4-hydroxy-3-methylbut-2-enyl diphosphate + 2 reduced [2Fe-2S]-[ferredoxin] + 2 H(+)</text>
        <dbReference type="Rhea" id="RHEA:24825"/>
        <dbReference type="Rhea" id="RHEA-COMP:10000"/>
        <dbReference type="Rhea" id="RHEA-COMP:10001"/>
        <dbReference type="ChEBI" id="CHEBI:15377"/>
        <dbReference type="ChEBI" id="CHEBI:15378"/>
        <dbReference type="ChEBI" id="CHEBI:33737"/>
        <dbReference type="ChEBI" id="CHEBI:33738"/>
        <dbReference type="ChEBI" id="CHEBI:57623"/>
        <dbReference type="ChEBI" id="CHEBI:128753"/>
        <dbReference type="EC" id="1.17.7.4"/>
    </reaction>
</comment>
<comment type="cofactor">
    <cofactor evidence="1">
        <name>[4Fe-4S] cluster</name>
        <dbReference type="ChEBI" id="CHEBI:49883"/>
    </cofactor>
    <text evidence="1">Binds 1 [4Fe-4S] cluster per subunit.</text>
</comment>
<comment type="pathway">
    <text evidence="1">Isoprenoid biosynthesis; dimethylallyl diphosphate biosynthesis; dimethylallyl diphosphate from (2E)-4-hydroxy-3-methylbutenyl diphosphate: step 1/1.</text>
</comment>
<comment type="pathway">
    <text evidence="1">Isoprenoid biosynthesis; isopentenyl diphosphate biosynthesis via DXP pathway; isopentenyl diphosphate from 1-deoxy-D-xylulose 5-phosphate: step 6/6.</text>
</comment>
<comment type="similarity">
    <text evidence="1">Belongs to the IspH family.</text>
</comment>